<gene>
    <name type="primary">CYP8</name>
    <name type="ordered locus">CNJ00200</name>
</gene>
<name>PPIL2_CRYNJ</name>
<comment type="function">
    <text evidence="1 3">May catalyze the cis-trans isomerization of proline imidic peptide bonds in oligopeptides thereby assisting the folding of proteins. May also function as a chaperone, playing a role in intracellular transport of proteins. May also have a protein ubiquitin ligase activity acting as an E3 ubiquitin protein ligase or as a ubiquitin-ubiquitin ligase promoting elongation of ubiquitin chains on proteins.</text>
</comment>
<comment type="catalytic activity">
    <reaction>
        <text>[protein]-peptidylproline (omega=180) = [protein]-peptidylproline (omega=0)</text>
        <dbReference type="Rhea" id="RHEA:16237"/>
        <dbReference type="Rhea" id="RHEA-COMP:10747"/>
        <dbReference type="Rhea" id="RHEA-COMP:10748"/>
        <dbReference type="ChEBI" id="CHEBI:83833"/>
        <dbReference type="ChEBI" id="CHEBI:83834"/>
        <dbReference type="EC" id="5.2.1.8"/>
    </reaction>
</comment>
<comment type="catalytic activity">
    <reaction evidence="3">
        <text>S-ubiquitinyl-[E2 ubiquitin-conjugating enzyme]-L-cysteine + [acceptor protein]-L-lysine = [E2 ubiquitin-conjugating enzyme]-L-cysteine + N(6)-ubiquitinyl-[acceptor protein]-L-lysine.</text>
        <dbReference type="EC" id="2.3.2.27"/>
    </reaction>
</comment>
<comment type="pathway">
    <text evidence="3">Protein modification; protein ubiquitination.</text>
</comment>
<comment type="subcellular location">
    <subcellularLocation>
        <location evidence="2 3">Nucleus</location>
    </subcellularLocation>
</comment>
<comment type="similarity">
    <text evidence="6">Belongs to the cyclophilin-type PPIase family. PPIL2 subfamily.</text>
</comment>
<sequence length="573" mass="63562">MGHNSDKLYVTHSEHAAGSHTASSFGKRQETGKSEFQRLPFDCCALSLQPFKNPVAVISETKAGEAPRADVFDLLNIVPYIRKFKSNPVTGKPLETSQLIKLNFSRNAEGNLHDPITYKVFSPHIHIVFLKNTGNVFDMASLQLLAIKPKTWRDLVNDEPFKRKDIITIQDPENLAARDLREYDYVKKDLKVSEDELAGDPLRGINVDAAGGASKVLKMIAEKNKSGQSPAPTPSKIDDGKGQEKKEGVVAKRKVEQMAYNASNYSSGRAAASLTSTSLMPETKSERAMFDEEEYMFEELSRPTKDKERQKSKAYATITTNFGPLNVELHGDRAPKTVYNFVQLAKAGKYDNVVFHRLIPGFMVQGGDPTGTGRGGESYWGEPFRDEHGEKGAYKHDSRGVLSMANSGPRTNGSQFFFTFRPTPHLDGKHTVFGKLVGGEETLDKIERVNVRPGGDRPVRDIVIQGVTVLQDPFEAYQARLQARLARQDQSDAALKRRAEAQKEREKDRTTWLGTKLGEKGAVGKRRMEEDVGVGKYLKVGGEAGQRTTLDVVDYGVEKKKKKAGGFGDFSGW</sequence>
<organism>
    <name type="scientific">Cryptococcus neoformans var. neoformans serotype D (strain JEC21 / ATCC MYA-565)</name>
    <name type="common">Filobasidiella neoformans</name>
    <dbReference type="NCBI Taxonomy" id="214684"/>
    <lineage>
        <taxon>Eukaryota</taxon>
        <taxon>Fungi</taxon>
        <taxon>Dikarya</taxon>
        <taxon>Basidiomycota</taxon>
        <taxon>Agaricomycotina</taxon>
        <taxon>Tremellomycetes</taxon>
        <taxon>Tremellales</taxon>
        <taxon>Cryptococcaceae</taxon>
        <taxon>Cryptococcus</taxon>
        <taxon>Cryptococcus neoformans species complex</taxon>
    </lineage>
</organism>
<protein>
    <recommendedName>
        <fullName evidence="6">Peptidyl-prolyl cis-trans isomerase-like 2</fullName>
        <shortName>PPIase</shortName>
        <ecNumber evidence="3">2.3.2.27</ecNumber>
        <ecNumber evidence="1">5.2.1.8</ecNumber>
    </recommendedName>
    <alternativeName>
        <fullName>Cyclophilin-60</fullName>
    </alternativeName>
    <alternativeName>
        <fullName>Cyclophilin-like protein Cyp-60</fullName>
    </alternativeName>
    <alternativeName>
        <fullName evidence="6">RING-type E3 ubiquitin transferase isomerase-like 2</fullName>
    </alternativeName>
    <alternativeName>
        <fullName>Rotamase</fullName>
    </alternativeName>
</protein>
<keyword id="KW-0413">Isomerase</keyword>
<keyword id="KW-0539">Nucleus</keyword>
<keyword id="KW-1185">Reference proteome</keyword>
<keyword id="KW-0697">Rotamase</keyword>
<keyword id="KW-0808">Transferase</keyword>
<keyword id="KW-0833">Ubl conjugation pathway</keyword>
<proteinExistence type="inferred from homology"/>
<dbReference type="EC" id="2.3.2.27" evidence="3"/>
<dbReference type="EC" id="5.2.1.8" evidence="1"/>
<dbReference type="EMBL" id="AE017350">
    <property type="protein sequence ID" value="AAW45760.1"/>
    <property type="molecule type" value="Genomic_DNA"/>
</dbReference>
<dbReference type="RefSeq" id="XP_567277.1">
    <property type="nucleotide sequence ID" value="XM_567277.1"/>
</dbReference>
<dbReference type="SMR" id="P0CP90"/>
<dbReference type="FunCoup" id="P0CP90">
    <property type="interactions" value="547"/>
</dbReference>
<dbReference type="STRING" id="214684.P0CP90"/>
<dbReference type="PaxDb" id="214684-P0CP90"/>
<dbReference type="EnsemblFungi" id="AAW45760">
    <property type="protein sequence ID" value="AAW45760"/>
    <property type="gene ID" value="CNJ00200"/>
</dbReference>
<dbReference type="GeneID" id="3254174"/>
<dbReference type="KEGG" id="cne:CNJ00200"/>
<dbReference type="VEuPathDB" id="FungiDB:CNJ00200"/>
<dbReference type="eggNOG" id="KOG0883">
    <property type="taxonomic scope" value="Eukaryota"/>
</dbReference>
<dbReference type="HOGENOM" id="CLU_012062_7_0_1"/>
<dbReference type="InParanoid" id="P0CP90"/>
<dbReference type="OMA" id="NFIKHCA"/>
<dbReference type="OrthoDB" id="407558at2759"/>
<dbReference type="UniPathway" id="UPA00143"/>
<dbReference type="Proteomes" id="UP000002149">
    <property type="component" value="Chromosome 10"/>
</dbReference>
<dbReference type="GO" id="GO:0071013">
    <property type="term" value="C:catalytic step 2 spliceosome"/>
    <property type="evidence" value="ECO:0000318"/>
    <property type="project" value="GO_Central"/>
</dbReference>
<dbReference type="GO" id="GO:0003755">
    <property type="term" value="F:peptidyl-prolyl cis-trans isomerase activity"/>
    <property type="evidence" value="ECO:0007669"/>
    <property type="project" value="UniProtKB-KW"/>
</dbReference>
<dbReference type="GO" id="GO:0061630">
    <property type="term" value="F:ubiquitin protein ligase activity"/>
    <property type="evidence" value="ECO:0000318"/>
    <property type="project" value="GO_Central"/>
</dbReference>
<dbReference type="GO" id="GO:0006457">
    <property type="term" value="P:protein folding"/>
    <property type="evidence" value="ECO:0000318"/>
    <property type="project" value="GO_Central"/>
</dbReference>
<dbReference type="GO" id="GO:0016567">
    <property type="term" value="P:protein ubiquitination"/>
    <property type="evidence" value="ECO:0007669"/>
    <property type="project" value="UniProtKB-UniPathway"/>
</dbReference>
<dbReference type="CDD" id="cd01923">
    <property type="entry name" value="cyclophilin_RING"/>
    <property type="match status" value="1"/>
</dbReference>
<dbReference type="CDD" id="cd16663">
    <property type="entry name" value="RING-Ubox_PPIL2"/>
    <property type="match status" value="1"/>
</dbReference>
<dbReference type="FunFam" id="3.30.40.10:FF:000079">
    <property type="entry name" value="Peptidyl-prolyl cis-trans isomerase 2"/>
    <property type="match status" value="1"/>
</dbReference>
<dbReference type="FunFam" id="2.40.100.10:FF:000014">
    <property type="entry name" value="Peptidyl-prolyl cis-trans isomerase cyp65"/>
    <property type="match status" value="1"/>
</dbReference>
<dbReference type="Gene3D" id="2.40.100.10">
    <property type="entry name" value="Cyclophilin-like"/>
    <property type="match status" value="1"/>
</dbReference>
<dbReference type="Gene3D" id="3.30.40.10">
    <property type="entry name" value="Zinc/RING finger domain, C3HC4 (zinc finger)"/>
    <property type="match status" value="1"/>
</dbReference>
<dbReference type="InterPro" id="IPR029000">
    <property type="entry name" value="Cyclophilin-like_dom_sf"/>
</dbReference>
<dbReference type="InterPro" id="IPR020892">
    <property type="entry name" value="Cyclophilin-type_PPIase_CS"/>
</dbReference>
<dbReference type="InterPro" id="IPR002130">
    <property type="entry name" value="Cyclophilin-type_PPIase_dom"/>
</dbReference>
<dbReference type="InterPro" id="IPR044666">
    <property type="entry name" value="Cyclophilin_A-like"/>
</dbReference>
<dbReference type="InterPro" id="IPR026951">
    <property type="entry name" value="PPIL2_U-box_dom"/>
</dbReference>
<dbReference type="InterPro" id="IPR003613">
    <property type="entry name" value="Ubox_domain"/>
</dbReference>
<dbReference type="InterPro" id="IPR013083">
    <property type="entry name" value="Znf_RING/FYVE/PHD"/>
</dbReference>
<dbReference type="PANTHER" id="PTHR45625">
    <property type="entry name" value="PEPTIDYL-PROLYL CIS-TRANS ISOMERASE-RELATED"/>
    <property type="match status" value="1"/>
</dbReference>
<dbReference type="PANTHER" id="PTHR45625:SF1">
    <property type="entry name" value="RING-TYPE E3 UBIQUITIN-PROTEIN LIGASE PPIL2"/>
    <property type="match status" value="1"/>
</dbReference>
<dbReference type="Pfam" id="PF00160">
    <property type="entry name" value="Pro_isomerase"/>
    <property type="match status" value="1"/>
</dbReference>
<dbReference type="PRINTS" id="PR00153">
    <property type="entry name" value="CSAPPISMRASE"/>
</dbReference>
<dbReference type="SMART" id="SM00504">
    <property type="entry name" value="Ubox"/>
    <property type="match status" value="1"/>
</dbReference>
<dbReference type="SUPFAM" id="SSF50891">
    <property type="entry name" value="Cyclophilin-like"/>
    <property type="match status" value="1"/>
</dbReference>
<dbReference type="SUPFAM" id="SSF57850">
    <property type="entry name" value="RING/U-box"/>
    <property type="match status" value="1"/>
</dbReference>
<dbReference type="PROSITE" id="PS00170">
    <property type="entry name" value="CSA_PPIASE_1"/>
    <property type="match status" value="1"/>
</dbReference>
<dbReference type="PROSITE" id="PS50072">
    <property type="entry name" value="CSA_PPIASE_2"/>
    <property type="match status" value="1"/>
</dbReference>
<dbReference type="PROSITE" id="PS51698">
    <property type="entry name" value="U_BOX"/>
    <property type="match status" value="1"/>
</dbReference>
<reference key="1">
    <citation type="journal article" date="2005" name="Science">
        <title>The genome of the basidiomycetous yeast and human pathogen Cryptococcus neoformans.</title>
        <authorList>
            <person name="Loftus B.J."/>
            <person name="Fung E."/>
            <person name="Roncaglia P."/>
            <person name="Rowley D."/>
            <person name="Amedeo P."/>
            <person name="Bruno D."/>
            <person name="Vamathevan J."/>
            <person name="Miranda M."/>
            <person name="Anderson I.J."/>
            <person name="Fraser J.A."/>
            <person name="Allen J.E."/>
            <person name="Bosdet I.E."/>
            <person name="Brent M.R."/>
            <person name="Chiu R."/>
            <person name="Doering T.L."/>
            <person name="Donlin M.J."/>
            <person name="D'Souza C.A."/>
            <person name="Fox D.S."/>
            <person name="Grinberg V."/>
            <person name="Fu J."/>
            <person name="Fukushima M."/>
            <person name="Haas B.J."/>
            <person name="Huang J.C."/>
            <person name="Janbon G."/>
            <person name="Jones S.J.M."/>
            <person name="Koo H.L."/>
            <person name="Krzywinski M.I."/>
            <person name="Kwon-Chung K.J."/>
            <person name="Lengeler K.B."/>
            <person name="Maiti R."/>
            <person name="Marra M.A."/>
            <person name="Marra R.E."/>
            <person name="Mathewson C.A."/>
            <person name="Mitchell T.G."/>
            <person name="Pertea M."/>
            <person name="Riggs F.R."/>
            <person name="Salzberg S.L."/>
            <person name="Schein J.E."/>
            <person name="Shvartsbeyn A."/>
            <person name="Shin H."/>
            <person name="Shumway M."/>
            <person name="Specht C.A."/>
            <person name="Suh B.B."/>
            <person name="Tenney A."/>
            <person name="Utterback T.R."/>
            <person name="Wickes B.L."/>
            <person name="Wortman J.R."/>
            <person name="Wye N.H."/>
            <person name="Kronstad J.W."/>
            <person name="Lodge J.K."/>
            <person name="Heitman J."/>
            <person name="Davis R.W."/>
            <person name="Fraser C.M."/>
            <person name="Hyman R.W."/>
        </authorList>
    </citation>
    <scope>NUCLEOTIDE SEQUENCE [LARGE SCALE GENOMIC DNA]</scope>
    <source>
        <strain>JEC21 / ATCC MYA-565</strain>
    </source>
</reference>
<accession>P0CP90</accession>
<accession>Q55KK3</accession>
<accession>Q5KAW8</accession>
<evidence type="ECO:0000250" key="1">
    <source>
        <dbReference type="UniProtKB" id="Q08752"/>
    </source>
</evidence>
<evidence type="ECO:0000250" key="2">
    <source>
        <dbReference type="UniProtKB" id="Q09928"/>
    </source>
</evidence>
<evidence type="ECO:0000250" key="3">
    <source>
        <dbReference type="UniProtKB" id="Q13356"/>
    </source>
</evidence>
<evidence type="ECO:0000255" key="4">
    <source>
        <dbReference type="PROSITE-ProRule" id="PRU00156"/>
    </source>
</evidence>
<evidence type="ECO:0000256" key="5">
    <source>
        <dbReference type="SAM" id="MobiDB-lite"/>
    </source>
</evidence>
<evidence type="ECO:0000305" key="6"/>
<feature type="chain" id="PRO_0000232984" description="Peptidyl-prolyl cis-trans isomerase-like 2">
    <location>
        <begin position="1"/>
        <end position="573"/>
    </location>
</feature>
<feature type="domain" description="U-box">
    <location>
        <begin position="37"/>
        <end position="119"/>
    </location>
</feature>
<feature type="domain" description="PPIase cyclophilin-type" evidence="4">
    <location>
        <begin position="312"/>
        <end position="469"/>
    </location>
</feature>
<feature type="region of interest" description="Disordered" evidence="5">
    <location>
        <begin position="223"/>
        <end position="247"/>
    </location>
</feature>
<feature type="region of interest" description="Disordered" evidence="5">
    <location>
        <begin position="489"/>
        <end position="515"/>
    </location>
</feature>
<feature type="compositionally biased region" description="Basic and acidic residues" evidence="5">
    <location>
        <begin position="236"/>
        <end position="247"/>
    </location>
</feature>
<feature type="compositionally biased region" description="Basic and acidic residues" evidence="5">
    <location>
        <begin position="489"/>
        <end position="510"/>
    </location>
</feature>